<name>FA9_RAT</name>
<reference key="1">
    <citation type="journal article" date="2004" name="Nature">
        <title>Genome sequence of the Brown Norway rat yields insights into mammalian evolution.</title>
        <authorList>
            <person name="Gibbs R.A."/>
            <person name="Weinstock G.M."/>
            <person name="Metzker M.L."/>
            <person name="Muzny D.M."/>
            <person name="Sodergren E.J."/>
            <person name="Scherer S."/>
            <person name="Scott G."/>
            <person name="Steffen D."/>
            <person name="Worley K.C."/>
            <person name="Burch P.E."/>
            <person name="Okwuonu G."/>
            <person name="Hines S."/>
            <person name="Lewis L."/>
            <person name="Deramo C."/>
            <person name="Delgado O."/>
            <person name="Dugan-Rocha S."/>
            <person name="Miner G."/>
            <person name="Morgan M."/>
            <person name="Hawes A."/>
            <person name="Gill R."/>
            <person name="Holt R.A."/>
            <person name="Adams M.D."/>
            <person name="Amanatides P.G."/>
            <person name="Baden-Tillson H."/>
            <person name="Barnstead M."/>
            <person name="Chin S."/>
            <person name="Evans C.A."/>
            <person name="Ferriera S."/>
            <person name="Fosler C."/>
            <person name="Glodek A."/>
            <person name="Gu Z."/>
            <person name="Jennings D."/>
            <person name="Kraft C.L."/>
            <person name="Nguyen T."/>
            <person name="Pfannkoch C.M."/>
            <person name="Sitter C."/>
            <person name="Sutton G.G."/>
            <person name="Venter J.C."/>
            <person name="Woodage T."/>
            <person name="Smith D."/>
            <person name="Lee H.-M."/>
            <person name="Gustafson E."/>
            <person name="Cahill P."/>
            <person name="Kana A."/>
            <person name="Doucette-Stamm L."/>
            <person name="Weinstock K."/>
            <person name="Fechtel K."/>
            <person name="Weiss R.B."/>
            <person name="Dunn D.M."/>
            <person name="Green E.D."/>
            <person name="Blakesley R.W."/>
            <person name="Bouffard G.G."/>
            <person name="De Jong P.J."/>
            <person name="Osoegawa K."/>
            <person name="Zhu B."/>
            <person name="Marra M."/>
            <person name="Schein J."/>
            <person name="Bosdet I."/>
            <person name="Fjell C."/>
            <person name="Jones S."/>
            <person name="Krzywinski M."/>
            <person name="Mathewson C."/>
            <person name="Siddiqui A."/>
            <person name="Wye N."/>
            <person name="McPherson J."/>
            <person name="Zhao S."/>
            <person name="Fraser C.M."/>
            <person name="Shetty J."/>
            <person name="Shatsman S."/>
            <person name="Geer K."/>
            <person name="Chen Y."/>
            <person name="Abramzon S."/>
            <person name="Nierman W.C."/>
            <person name="Havlak P.H."/>
            <person name="Chen R."/>
            <person name="Durbin K.J."/>
            <person name="Egan A."/>
            <person name="Ren Y."/>
            <person name="Song X.-Z."/>
            <person name="Li B."/>
            <person name="Liu Y."/>
            <person name="Qin X."/>
            <person name="Cawley S."/>
            <person name="Cooney A.J."/>
            <person name="D'Souza L.M."/>
            <person name="Martin K."/>
            <person name="Wu J.Q."/>
            <person name="Gonzalez-Garay M.L."/>
            <person name="Jackson A.R."/>
            <person name="Kalafus K.J."/>
            <person name="McLeod M.P."/>
            <person name="Milosavljevic A."/>
            <person name="Virk D."/>
            <person name="Volkov A."/>
            <person name="Wheeler D.A."/>
            <person name="Zhang Z."/>
            <person name="Bailey J.A."/>
            <person name="Eichler E.E."/>
            <person name="Tuzun E."/>
            <person name="Birney E."/>
            <person name="Mongin E."/>
            <person name="Ureta-Vidal A."/>
            <person name="Woodwark C."/>
            <person name="Zdobnov E."/>
            <person name="Bork P."/>
            <person name="Suyama M."/>
            <person name="Torrents D."/>
            <person name="Alexandersson M."/>
            <person name="Trask B.J."/>
            <person name="Young J.M."/>
            <person name="Huang H."/>
            <person name="Wang H."/>
            <person name="Xing H."/>
            <person name="Daniels S."/>
            <person name="Gietzen D."/>
            <person name="Schmidt J."/>
            <person name="Stevens K."/>
            <person name="Vitt U."/>
            <person name="Wingrove J."/>
            <person name="Camara F."/>
            <person name="Mar Alba M."/>
            <person name="Abril J.F."/>
            <person name="Guigo R."/>
            <person name="Smit A."/>
            <person name="Dubchak I."/>
            <person name="Rubin E.M."/>
            <person name="Couronne O."/>
            <person name="Poliakov A."/>
            <person name="Huebner N."/>
            <person name="Ganten D."/>
            <person name="Goesele C."/>
            <person name="Hummel O."/>
            <person name="Kreitler T."/>
            <person name="Lee Y.-A."/>
            <person name="Monti J."/>
            <person name="Schulz H."/>
            <person name="Zimdahl H."/>
            <person name="Himmelbauer H."/>
            <person name="Lehrach H."/>
            <person name="Jacob H.J."/>
            <person name="Bromberg S."/>
            <person name="Gullings-Handley J."/>
            <person name="Jensen-Seaman M.I."/>
            <person name="Kwitek A.E."/>
            <person name="Lazar J."/>
            <person name="Pasko D."/>
            <person name="Tonellato P.J."/>
            <person name="Twigger S."/>
            <person name="Ponting C.P."/>
            <person name="Duarte J.M."/>
            <person name="Rice S."/>
            <person name="Goodstadt L."/>
            <person name="Beatson S.A."/>
            <person name="Emes R.D."/>
            <person name="Winter E.E."/>
            <person name="Webber C."/>
            <person name="Brandt P."/>
            <person name="Nyakatura G."/>
            <person name="Adetobi M."/>
            <person name="Chiaromonte F."/>
            <person name="Elnitski L."/>
            <person name="Eswara P."/>
            <person name="Hardison R.C."/>
            <person name="Hou M."/>
            <person name="Kolbe D."/>
            <person name="Makova K."/>
            <person name="Miller W."/>
            <person name="Nekrutenko A."/>
            <person name="Riemer C."/>
            <person name="Schwartz S."/>
            <person name="Taylor J."/>
            <person name="Yang S."/>
            <person name="Zhang Y."/>
            <person name="Lindpaintner K."/>
            <person name="Andrews T.D."/>
            <person name="Caccamo M."/>
            <person name="Clamp M."/>
            <person name="Clarke L."/>
            <person name="Curwen V."/>
            <person name="Durbin R.M."/>
            <person name="Eyras E."/>
            <person name="Searle S.M."/>
            <person name="Cooper G.M."/>
            <person name="Batzoglou S."/>
            <person name="Brudno M."/>
            <person name="Sidow A."/>
            <person name="Stone E.A."/>
            <person name="Payseur B.A."/>
            <person name="Bourque G."/>
            <person name="Lopez-Otin C."/>
            <person name="Puente X.S."/>
            <person name="Chakrabarti K."/>
            <person name="Chatterji S."/>
            <person name="Dewey C."/>
            <person name="Pachter L."/>
            <person name="Bray N."/>
            <person name="Yap V.B."/>
            <person name="Caspi A."/>
            <person name="Tesler G."/>
            <person name="Pevzner P.A."/>
            <person name="Haussler D."/>
            <person name="Roskin K.M."/>
            <person name="Baertsch R."/>
            <person name="Clawson H."/>
            <person name="Furey T.S."/>
            <person name="Hinrichs A.S."/>
            <person name="Karolchik D."/>
            <person name="Kent W.J."/>
            <person name="Rosenbloom K.R."/>
            <person name="Trumbower H."/>
            <person name="Weirauch M."/>
            <person name="Cooper D.N."/>
            <person name="Stenson P.D."/>
            <person name="Ma B."/>
            <person name="Brent M."/>
            <person name="Arumugam M."/>
            <person name="Shteynberg D."/>
            <person name="Copley R.R."/>
            <person name="Taylor M.S."/>
            <person name="Riethman H."/>
            <person name="Mudunuri U."/>
            <person name="Peterson J."/>
            <person name="Guyer M."/>
            <person name="Felsenfeld A."/>
            <person name="Old S."/>
            <person name="Mockrin S."/>
            <person name="Collins F.S."/>
        </authorList>
    </citation>
    <scope>NUCLEOTIDE SEQUENCE [LARGE SCALE GENOMIC DNA]</scope>
    <source>
        <strain>Brown Norway</strain>
    </source>
</reference>
<reference key="2">
    <citation type="submission" date="2005-07" db="EMBL/GenBank/DDBJ databases">
        <authorList>
            <person name="Mural R.J."/>
            <person name="Adams M.D."/>
            <person name="Myers E.W."/>
            <person name="Smith H.O."/>
            <person name="Venter J.C."/>
        </authorList>
    </citation>
    <scope>NUCLEOTIDE SEQUENCE [LARGE SCALE GENOMIC DNA]</scope>
    <source>
        <strain>Brown Norway</strain>
    </source>
</reference>
<reference key="3">
    <citation type="journal article" date="1990" name="Genomics">
        <title>Direct sequencing of the activation peptide and the catalytic domain of the factor IX gene in six species.</title>
        <authorList>
            <person name="Sarkar G."/>
            <person name="Koeberl D.D."/>
            <person name="Sommer S.S."/>
        </authorList>
    </citation>
    <scope>NUCLEOTIDE SEQUENCE [MRNA] OF 173-454</scope>
</reference>
<reference key="4">
    <citation type="journal article" date="2010" name="Thromb. Haemost.">
        <title>Nitrophorin 2, a factor IX(a)-directed anticoagulant, inhibits arterial thrombosis without impairing haemostasis.</title>
        <authorList>
            <person name="Mizurini D.M."/>
            <person name="Francischetti I.M."/>
            <person name="Andersen J.F."/>
            <person name="Monteiro R.Q."/>
        </authorList>
    </citation>
    <scope>INTERACTION WITH TRIATOMID BUG NITROPHORIN-2</scope>
</reference>
<feature type="signal peptide" evidence="4">
    <location>
        <begin position="1"/>
        <end position="21"/>
    </location>
</feature>
<feature type="propeptide" id="PRO_0000433111" evidence="2">
    <location>
        <begin position="22"/>
        <end position="39"/>
    </location>
</feature>
<feature type="chain" id="PRO_0000088685" description="Coagulation factor IX">
    <location>
        <begin position="40"/>
        <end position="462"/>
    </location>
</feature>
<feature type="chain" id="PRO_0000433112" description="Coagulation factor IXa light chain">
    <location>
        <begin position="40"/>
        <end position="185"/>
    </location>
</feature>
<feature type="propeptide" id="PRO_0000433113" description="Activation peptide" evidence="1">
    <location>
        <begin position="186"/>
        <end position="227"/>
    </location>
</feature>
<feature type="chain" id="PRO_0000433114" description="Coagulation factor IXa heavy chain">
    <location>
        <begin position="228"/>
        <end position="462"/>
    </location>
</feature>
<feature type="domain" description="Gla" evidence="7">
    <location>
        <begin position="40"/>
        <end position="86"/>
    </location>
</feature>
<feature type="domain" description="EGF-like; calcium-binding" evidence="5">
    <location>
        <begin position="86"/>
        <end position="122"/>
    </location>
</feature>
<feature type="domain" description="Peptidase S1" evidence="6">
    <location>
        <begin position="228"/>
        <end position="460"/>
    </location>
</feature>
<feature type="active site" description="Charge relay system" evidence="2">
    <location>
        <position position="268"/>
    </location>
</feature>
<feature type="active site" description="Charge relay system" evidence="2">
    <location>
        <position position="316"/>
    </location>
</feature>
<feature type="active site" description="Charge relay system" evidence="2">
    <location>
        <position position="412"/>
    </location>
</feature>
<feature type="binding site" evidence="2">
    <location>
        <position position="40"/>
    </location>
    <ligand>
        <name>Ca(2+)</name>
        <dbReference type="ChEBI" id="CHEBI:29108"/>
        <label>1</label>
    </ligand>
</feature>
<feature type="binding site" evidence="2">
    <location>
        <position position="41"/>
    </location>
    <ligand>
        <name>Ca(2+)</name>
        <dbReference type="ChEBI" id="CHEBI:29108"/>
        <label>2</label>
    </ligand>
</feature>
<feature type="binding site" description="via 4-carboxyglutamate" evidence="2">
    <location>
        <position position="46"/>
    </location>
    <ligand>
        <name>Ca(2+)</name>
        <dbReference type="ChEBI" id="CHEBI:29108"/>
        <label>1</label>
    </ligand>
</feature>
<feature type="binding site" description="via 4-carboxyglutamate" evidence="2">
    <location>
        <position position="46"/>
    </location>
    <ligand>
        <name>Ca(2+)</name>
        <dbReference type="ChEBI" id="CHEBI:29108"/>
        <label>2</label>
    </ligand>
</feature>
<feature type="binding site" description="via 4-carboxyglutamate" evidence="2">
    <location>
        <position position="47"/>
    </location>
    <ligand>
        <name>Ca(2+)</name>
        <dbReference type="ChEBI" id="CHEBI:29108"/>
        <label>2</label>
    </ligand>
</feature>
<feature type="binding site" description="via 4-carboxyglutamate" evidence="2">
    <location>
        <position position="47"/>
    </location>
    <ligand>
        <name>Ca(2+)</name>
        <dbReference type="ChEBI" id="CHEBI:29108"/>
        <label>3</label>
    </ligand>
</feature>
<feature type="binding site" description="via 4-carboxyglutamate" evidence="2 3">
    <location>
        <position position="54"/>
    </location>
    <ligand>
        <name>Ca(2+)</name>
        <dbReference type="ChEBI" id="CHEBI:29108"/>
        <label>4</label>
    </ligand>
</feature>
<feature type="binding site" description="via 4-carboxyglutamate" evidence="2 3">
    <location>
        <position position="54"/>
    </location>
    <ligand>
        <name>Mg(2+)</name>
        <dbReference type="ChEBI" id="CHEBI:18420"/>
        <label>1</label>
    </ligand>
</feature>
<feature type="binding site" description="via 4-carboxyglutamate" evidence="2">
    <location>
        <position position="56"/>
    </location>
    <ligand>
        <name>Ca(2+)</name>
        <dbReference type="ChEBI" id="CHEBI:29108"/>
        <label>1</label>
    </ligand>
</feature>
<feature type="binding site" description="via 4-carboxyglutamate" evidence="2">
    <location>
        <position position="56"/>
    </location>
    <ligand>
        <name>Ca(2+)</name>
        <dbReference type="ChEBI" id="CHEBI:29108"/>
        <label>2</label>
    </ligand>
</feature>
<feature type="binding site" description="via 4-carboxyglutamate" evidence="2">
    <location>
        <position position="56"/>
    </location>
    <ligand>
        <name>Ca(2+)</name>
        <dbReference type="ChEBI" id="CHEBI:29108"/>
        <label>3</label>
    </ligand>
</feature>
<feature type="binding site" description="via 4-carboxyglutamate" evidence="2 3">
    <location>
        <position position="59"/>
    </location>
    <ligand>
        <name>Ca(2+)</name>
        <dbReference type="ChEBI" id="CHEBI:29108"/>
        <label>4</label>
    </ligand>
</feature>
<feature type="binding site" description="via 4-carboxyglutamate" evidence="2 3">
    <location>
        <position position="59"/>
    </location>
    <ligand>
        <name>Mg(2+)</name>
        <dbReference type="ChEBI" id="CHEBI:18420"/>
        <label>1</label>
    </ligand>
</feature>
<feature type="binding site" description="via 4-carboxyglutamate" evidence="2">
    <location>
        <position position="60"/>
    </location>
    <ligand>
        <name>Ca(2+)</name>
        <dbReference type="ChEBI" id="CHEBI:29108"/>
        <label>1</label>
    </ligand>
</feature>
<feature type="binding site" description="via 4-carboxyglutamate" evidence="2 3">
    <location>
        <position position="65"/>
    </location>
    <ligand>
        <name>Ca(2+)</name>
        <dbReference type="ChEBI" id="CHEBI:29108"/>
        <label>5</label>
    </ligand>
</feature>
<feature type="binding site" description="via 4-carboxyglutamate" evidence="2 3">
    <location>
        <position position="65"/>
    </location>
    <ligand>
        <name>Mg(2+)</name>
        <dbReference type="ChEBI" id="CHEBI:18420"/>
        <label>2</label>
    </ligand>
</feature>
<feature type="binding site" description="via 4-carboxyglutamate" evidence="2">
    <location>
        <position position="66"/>
    </location>
    <ligand>
        <name>Ca(2+)</name>
        <dbReference type="ChEBI" id="CHEBI:29108"/>
        <label>2</label>
    </ligand>
</feature>
<feature type="binding site" description="via 4-carboxyglutamate" evidence="2">
    <location>
        <position position="66"/>
    </location>
    <ligand>
        <name>Ca(2+)</name>
        <dbReference type="ChEBI" id="CHEBI:29108"/>
        <label>3</label>
    </ligand>
</feature>
<feature type="binding site" description="via 4-carboxyglutamate" evidence="2">
    <location>
        <position position="69"/>
    </location>
    <ligand>
        <name>Ca(2+)</name>
        <dbReference type="ChEBI" id="CHEBI:29108"/>
        <label>3</label>
    </ligand>
</feature>
<feature type="binding site" description="via 4-carboxyglutamate" evidence="2">
    <location>
        <position position="69"/>
    </location>
    <ligand>
        <name>Ca(2+)</name>
        <dbReference type="ChEBI" id="CHEBI:29108"/>
        <label>5</label>
    </ligand>
</feature>
<feature type="binding site" description="via 4-carboxyglutamate" evidence="2">
    <location>
        <position position="69"/>
    </location>
    <ligand>
        <name>Mg(2+)</name>
        <dbReference type="ChEBI" id="CHEBI:18420"/>
        <label>2</label>
    </ligand>
</feature>
<feature type="binding site" description="via 4-carboxyglutamate" evidence="3">
    <location>
        <position position="75"/>
    </location>
    <ligand>
        <name>Ca(2+)</name>
        <dbReference type="ChEBI" id="CHEBI:29108"/>
        <label>6</label>
    </ligand>
</feature>
<feature type="binding site" description="via 4-carboxyglutamate" evidence="3">
    <location>
        <position position="75"/>
    </location>
    <ligand>
        <name>Mg(2+)</name>
        <dbReference type="ChEBI" id="CHEBI:18420"/>
        <label>3</label>
    </ligand>
</feature>
<feature type="binding site" description="via 4-carboxyglutamate" evidence="3">
    <location>
        <position position="79"/>
    </location>
    <ligand>
        <name>Ca(2+)</name>
        <dbReference type="ChEBI" id="CHEBI:29108"/>
        <label>6</label>
    </ligand>
</feature>
<feature type="binding site" description="via 4-carboxyglutamate" evidence="3">
    <location>
        <position position="79"/>
    </location>
    <ligand>
        <name>Mg(2+)</name>
        <dbReference type="ChEBI" id="CHEBI:18420"/>
        <label>3</label>
    </ligand>
</feature>
<feature type="binding site" evidence="2">
    <location>
        <position position="86"/>
    </location>
    <ligand>
        <name>Ca(2+)</name>
        <dbReference type="ChEBI" id="CHEBI:29108"/>
        <label>7</label>
    </ligand>
</feature>
<feature type="binding site" evidence="2">
    <location>
        <position position="87"/>
    </location>
    <ligand>
        <name>Ca(2+)</name>
        <dbReference type="ChEBI" id="CHEBI:29108"/>
        <label>7</label>
    </ligand>
</feature>
<feature type="binding site" evidence="2">
    <location>
        <position position="89"/>
    </location>
    <ligand>
        <name>Ca(2+)</name>
        <dbReference type="ChEBI" id="CHEBI:29108"/>
        <label>7</label>
    </ligand>
</feature>
<feature type="binding site" evidence="2">
    <location>
        <position position="103"/>
    </location>
    <ligand>
        <name>Ca(2+)</name>
        <dbReference type="ChEBI" id="CHEBI:29108"/>
        <label>7</label>
    </ligand>
</feature>
<feature type="binding site" evidence="2">
    <location>
        <position position="104"/>
    </location>
    <ligand>
        <name>Ca(2+)</name>
        <dbReference type="ChEBI" id="CHEBI:29108"/>
        <label>7</label>
    </ligand>
</feature>
<feature type="binding site" evidence="2">
    <location>
        <position position="282"/>
    </location>
    <ligand>
        <name>Ca(2+)</name>
        <dbReference type="ChEBI" id="CHEBI:29108"/>
        <label>8</label>
    </ligand>
</feature>
<feature type="binding site" evidence="2">
    <location>
        <position position="284"/>
    </location>
    <ligand>
        <name>Ca(2+)</name>
        <dbReference type="ChEBI" id="CHEBI:29108"/>
        <label>8</label>
    </ligand>
</feature>
<feature type="binding site" evidence="2">
    <location>
        <position position="287"/>
    </location>
    <ligand>
        <name>Ca(2+)</name>
        <dbReference type="ChEBI" id="CHEBI:29108"/>
        <label>8</label>
    </ligand>
</feature>
<feature type="binding site" evidence="2">
    <location>
        <position position="289"/>
    </location>
    <ligand>
        <name>Ca(2+)</name>
        <dbReference type="ChEBI" id="CHEBI:29108"/>
        <label>8</label>
    </ligand>
</feature>
<feature type="binding site" evidence="2">
    <location>
        <position position="292"/>
    </location>
    <ligand>
        <name>Ca(2+)</name>
        <dbReference type="ChEBI" id="CHEBI:29108"/>
        <label>8</label>
    </ligand>
</feature>
<feature type="site" description="Cleavage; by factor XIa" evidence="2">
    <location>
        <begin position="185"/>
        <end position="186"/>
    </location>
</feature>
<feature type="site" description="Cleavage; by factor XIa" evidence="2">
    <location>
        <begin position="227"/>
        <end position="228"/>
    </location>
</feature>
<feature type="modified residue" description="4-carboxyglutamate" evidence="3 7">
    <location>
        <position position="46"/>
    </location>
</feature>
<feature type="modified residue" description="4-carboxyglutamate" evidence="3 7">
    <location>
        <position position="47"/>
    </location>
</feature>
<feature type="modified residue" description="4-carboxyglutamate" evidence="3 7">
    <location>
        <position position="54"/>
    </location>
</feature>
<feature type="modified residue" description="4-carboxyglutamate" evidence="3 7">
    <location>
        <position position="56"/>
    </location>
</feature>
<feature type="modified residue" description="4-carboxyglutamate" evidence="3 7">
    <location>
        <position position="59"/>
    </location>
</feature>
<feature type="modified residue" description="4-carboxyglutamate" evidence="3 7">
    <location>
        <position position="60"/>
    </location>
</feature>
<feature type="modified residue" description="4-carboxyglutamate" evidence="3 7">
    <location>
        <position position="65"/>
    </location>
</feature>
<feature type="modified residue" description="4-carboxyglutamate" evidence="3 7">
    <location>
        <position position="66"/>
    </location>
</feature>
<feature type="modified residue" description="4-carboxyglutamate" evidence="3 7">
    <location>
        <position position="69"/>
    </location>
</feature>
<feature type="modified residue" description="4-carboxyglutamate" evidence="3 7">
    <location>
        <position position="72"/>
    </location>
</feature>
<feature type="modified residue" description="4-carboxyglutamate" evidence="3 7">
    <location>
        <position position="75"/>
    </location>
</feature>
<feature type="modified residue" description="4-carboxyglutamate" evidence="3 7">
    <location>
        <position position="79"/>
    </location>
</feature>
<feature type="modified residue" description="(3R)-3-hydroxyaspartate" evidence="2">
    <location>
        <position position="103"/>
    </location>
</feature>
<feature type="modified residue" description="Phosphoserine" evidence="2">
    <location>
        <position position="107"/>
    </location>
</feature>
<feature type="modified residue" description="Sulfotyrosine" evidence="2">
    <location>
        <position position="195"/>
    </location>
</feature>
<feature type="modified residue" description="Phosphoserine" evidence="2">
    <location>
        <position position="198"/>
    </location>
</feature>
<feature type="modified residue" description="Phosphothreonine; alternate" evidence="2">
    <location>
        <position position="199"/>
    </location>
</feature>
<feature type="glycosylation site" description="O-linked (GalNAc...) threonine" evidence="2">
    <location>
        <position position="78"/>
    </location>
</feature>
<feature type="glycosylation site" description="O-linked (Glc...) serine" evidence="2">
    <location>
        <position position="92"/>
    </location>
</feature>
<feature type="glycosylation site" description="O-linked (GalNAc...) threonine; alternate" evidence="2">
    <location>
        <position position="199"/>
    </location>
</feature>
<feature type="glycosylation site" description="N-linked (GlcNAc...) asparagine" evidence="4">
    <location>
        <position position="208"/>
    </location>
</feature>
<feature type="glycosylation site" description="N-linked (GlcNAc...) asparagine" evidence="4">
    <location>
        <position position="214"/>
    </location>
</feature>
<feature type="glycosylation site" description="O-linked (GalNAc...) threonine" evidence="2">
    <location>
        <position position="216"/>
    </location>
</feature>
<feature type="glycosylation site" description="O-linked (GalNAc...) threonine" evidence="2">
    <location>
        <position position="226"/>
    </location>
</feature>
<feature type="glycosylation site" description="N-linked (GlcNAc...) asparagine" evidence="4">
    <location>
        <position position="307"/>
    </location>
</feature>
<feature type="disulfide bond" evidence="3">
    <location>
        <begin position="57"/>
        <end position="62"/>
    </location>
</feature>
<feature type="disulfide bond" evidence="2">
    <location>
        <begin position="90"/>
        <end position="101"/>
    </location>
</feature>
<feature type="disulfide bond" evidence="2">
    <location>
        <begin position="95"/>
        <end position="110"/>
    </location>
</feature>
<feature type="disulfide bond" evidence="2">
    <location>
        <begin position="112"/>
        <end position="121"/>
    </location>
</feature>
<feature type="disulfide bond" evidence="2">
    <location>
        <begin position="127"/>
        <end position="138"/>
    </location>
</feature>
<feature type="disulfide bond" evidence="2">
    <location>
        <begin position="134"/>
        <end position="148"/>
    </location>
</feature>
<feature type="disulfide bond" evidence="2">
    <location>
        <begin position="150"/>
        <end position="163"/>
    </location>
</feature>
<feature type="disulfide bond" description="Interchain (between light and heavy chains)" evidence="2">
    <location>
        <begin position="171"/>
        <end position="336"/>
    </location>
</feature>
<feature type="disulfide bond" evidence="2">
    <location>
        <begin position="253"/>
        <end position="269"/>
    </location>
</feature>
<feature type="disulfide bond" evidence="2">
    <location>
        <begin position="383"/>
        <end position="397"/>
    </location>
</feature>
<feature type="disulfide bond" evidence="2">
    <location>
        <begin position="408"/>
        <end position="436"/>
    </location>
</feature>
<keyword id="KW-0094">Blood coagulation</keyword>
<keyword id="KW-0106">Calcium</keyword>
<keyword id="KW-1015">Disulfide bond</keyword>
<keyword id="KW-0245">EGF-like domain</keyword>
<keyword id="KW-0301">Gamma-carboxyglutamic acid</keyword>
<keyword id="KW-0325">Glycoprotein</keyword>
<keyword id="KW-0356">Hemostasis</keyword>
<keyword id="KW-0378">Hydrolase</keyword>
<keyword id="KW-0379">Hydroxylation</keyword>
<keyword id="KW-0460">Magnesium</keyword>
<keyword id="KW-0479">Metal-binding</keyword>
<keyword id="KW-0597">Phosphoprotein</keyword>
<keyword id="KW-0645">Protease</keyword>
<keyword id="KW-1185">Reference proteome</keyword>
<keyword id="KW-0964">Secreted</keyword>
<keyword id="KW-0720">Serine protease</keyword>
<keyword id="KW-0732">Signal</keyword>
<keyword id="KW-0765">Sulfation</keyword>
<keyword id="KW-0865">Zymogen</keyword>
<protein>
    <recommendedName>
        <fullName>Coagulation factor IX</fullName>
        <ecNumber evidence="2">3.4.21.22</ecNumber>
    </recommendedName>
    <alternativeName>
        <fullName>Christmas factor</fullName>
    </alternativeName>
    <component>
        <recommendedName>
            <fullName>Coagulation factor IXa light chain</fullName>
        </recommendedName>
    </component>
    <component>
        <recommendedName>
            <fullName>Coagulation factor IXa heavy chain</fullName>
        </recommendedName>
    </component>
</protein>
<dbReference type="EC" id="3.4.21.22" evidence="2"/>
<dbReference type="EMBL" id="AABR06108743">
    <property type="status" value="NOT_ANNOTATED_CDS"/>
    <property type="molecule type" value="Genomic_DNA"/>
</dbReference>
<dbReference type="EMBL" id="AABR06108744">
    <property type="status" value="NOT_ANNOTATED_CDS"/>
    <property type="molecule type" value="Genomic_DNA"/>
</dbReference>
<dbReference type="EMBL" id="AABR06108745">
    <property type="status" value="NOT_ANNOTATED_CDS"/>
    <property type="molecule type" value="Genomic_DNA"/>
</dbReference>
<dbReference type="EMBL" id="AABR06108746">
    <property type="status" value="NOT_ANNOTATED_CDS"/>
    <property type="molecule type" value="Genomic_DNA"/>
</dbReference>
<dbReference type="EMBL" id="CH474019">
    <property type="protein sequence ID" value="EDL86171.1"/>
    <property type="molecule type" value="Genomic_DNA"/>
</dbReference>
<dbReference type="EMBL" id="M26247">
    <property type="protein sequence ID" value="AAA41162.1"/>
    <property type="molecule type" value="mRNA"/>
</dbReference>
<dbReference type="PIR" id="I84621">
    <property type="entry name" value="I84621"/>
</dbReference>
<dbReference type="RefSeq" id="NP_113728.1">
    <property type="nucleotide sequence ID" value="NM_031540.1"/>
</dbReference>
<dbReference type="SMR" id="P16296"/>
<dbReference type="FunCoup" id="P16296">
    <property type="interactions" value="22"/>
</dbReference>
<dbReference type="STRING" id="10116.ENSRNOP00000004559"/>
<dbReference type="BindingDB" id="P16296"/>
<dbReference type="ChEMBL" id="CHEMBL4105734"/>
<dbReference type="MEROPS" id="S01.214"/>
<dbReference type="GlyCosmos" id="P16296">
    <property type="glycosylation" value="8 sites, No reported glycans"/>
</dbReference>
<dbReference type="GlyGen" id="P16296">
    <property type="glycosylation" value="8 sites"/>
</dbReference>
<dbReference type="PhosphoSitePlus" id="P16296"/>
<dbReference type="PaxDb" id="10116-ENSRNOP00000004559"/>
<dbReference type="PeptideAtlas" id="P16296"/>
<dbReference type="GeneID" id="24946"/>
<dbReference type="KEGG" id="rno:24946"/>
<dbReference type="AGR" id="RGD:2589"/>
<dbReference type="CTD" id="2158"/>
<dbReference type="RGD" id="2589">
    <property type="gene designation" value="F9"/>
</dbReference>
<dbReference type="VEuPathDB" id="HostDB:ENSRNOG00000003430"/>
<dbReference type="eggNOG" id="ENOG502QUEV">
    <property type="taxonomic scope" value="Eukaryota"/>
</dbReference>
<dbReference type="InParanoid" id="P16296"/>
<dbReference type="OrthoDB" id="8909918at2759"/>
<dbReference type="TreeFam" id="TF327329"/>
<dbReference type="Reactome" id="R-RNO-140834">
    <property type="pathway name" value="Extrinsic Pathway of Fibrin Clot Formation"/>
</dbReference>
<dbReference type="Reactome" id="R-RNO-140837">
    <property type="pathway name" value="Intrinsic Pathway of Fibrin Clot Formation"/>
</dbReference>
<dbReference type="Reactome" id="R-RNO-159740">
    <property type="pathway name" value="Gamma-carboxylation of protein precursors"/>
</dbReference>
<dbReference type="Reactome" id="R-RNO-159763">
    <property type="pathway name" value="Transport of gamma-carboxylated protein precursors from the endoplasmic reticulum to the Golgi apparatus"/>
</dbReference>
<dbReference type="Reactome" id="R-RNO-159782">
    <property type="pathway name" value="Removal of aminoterminal propeptides from gamma-carboxylated proteins"/>
</dbReference>
<dbReference type="PRO" id="PR:P16296"/>
<dbReference type="Proteomes" id="UP000002494">
    <property type="component" value="Chromosome X"/>
</dbReference>
<dbReference type="Proteomes" id="UP000234681">
    <property type="component" value="Chromosome x"/>
</dbReference>
<dbReference type="Bgee" id="ENSRNOG00000003430">
    <property type="expression patterns" value="Expressed in liver and 3 other cell types or tissues"/>
</dbReference>
<dbReference type="GO" id="GO:0005615">
    <property type="term" value="C:extracellular space"/>
    <property type="evidence" value="ECO:0000250"/>
    <property type="project" value="UniProtKB"/>
</dbReference>
<dbReference type="GO" id="GO:0005509">
    <property type="term" value="F:calcium ion binding"/>
    <property type="evidence" value="ECO:0000250"/>
    <property type="project" value="UniProtKB"/>
</dbReference>
<dbReference type="GO" id="GO:0004175">
    <property type="term" value="F:endopeptidase activity"/>
    <property type="evidence" value="ECO:0000250"/>
    <property type="project" value="UniProtKB"/>
</dbReference>
<dbReference type="GO" id="GO:0046872">
    <property type="term" value="F:metal ion binding"/>
    <property type="evidence" value="ECO:0000266"/>
    <property type="project" value="RGD"/>
</dbReference>
<dbReference type="GO" id="GO:0008233">
    <property type="term" value="F:peptidase activity"/>
    <property type="evidence" value="ECO:0000266"/>
    <property type="project" value="RGD"/>
</dbReference>
<dbReference type="GO" id="GO:0004252">
    <property type="term" value="F:serine-type endopeptidase activity"/>
    <property type="evidence" value="ECO:0000318"/>
    <property type="project" value="GO_Central"/>
</dbReference>
<dbReference type="GO" id="GO:0007596">
    <property type="term" value="P:blood coagulation"/>
    <property type="evidence" value="ECO:0000266"/>
    <property type="project" value="RGD"/>
</dbReference>
<dbReference type="GO" id="GO:0006508">
    <property type="term" value="P:proteolysis"/>
    <property type="evidence" value="ECO:0000250"/>
    <property type="project" value="UniProtKB"/>
</dbReference>
<dbReference type="GO" id="GO:0031638">
    <property type="term" value="P:zymogen activation"/>
    <property type="evidence" value="ECO:0000250"/>
    <property type="project" value="UniProtKB"/>
</dbReference>
<dbReference type="CDD" id="cd00054">
    <property type="entry name" value="EGF_CA"/>
    <property type="match status" value="1"/>
</dbReference>
<dbReference type="CDD" id="cd00190">
    <property type="entry name" value="Tryp_SPc"/>
    <property type="match status" value="1"/>
</dbReference>
<dbReference type="FunFam" id="2.10.25.10:FF:000259">
    <property type="entry name" value="Coagulation factor VII"/>
    <property type="match status" value="1"/>
</dbReference>
<dbReference type="FunFam" id="2.40.10.10:FF:000013">
    <property type="entry name" value="Coagulation factor X"/>
    <property type="match status" value="1"/>
</dbReference>
<dbReference type="FunFam" id="2.10.25.10:FF:000162">
    <property type="entry name" value="Coagulation factor X (Predicted)"/>
    <property type="match status" value="1"/>
</dbReference>
<dbReference type="FunFam" id="4.10.740.10:FF:000001">
    <property type="entry name" value="vitamin K-dependent protein S"/>
    <property type="match status" value="1"/>
</dbReference>
<dbReference type="Gene3D" id="4.10.740.10">
    <property type="entry name" value="Coagulation Factor IX"/>
    <property type="match status" value="1"/>
</dbReference>
<dbReference type="Gene3D" id="2.10.25.10">
    <property type="entry name" value="Laminin"/>
    <property type="match status" value="2"/>
</dbReference>
<dbReference type="Gene3D" id="2.40.10.10">
    <property type="entry name" value="Trypsin-like serine proteases"/>
    <property type="match status" value="2"/>
</dbReference>
<dbReference type="InterPro" id="IPR017857">
    <property type="entry name" value="Coagulation_fac-like_Gla_dom"/>
</dbReference>
<dbReference type="InterPro" id="IPR001881">
    <property type="entry name" value="EGF-like_Ca-bd_dom"/>
</dbReference>
<dbReference type="InterPro" id="IPR000742">
    <property type="entry name" value="EGF-like_dom"/>
</dbReference>
<dbReference type="InterPro" id="IPR000152">
    <property type="entry name" value="EGF-type_Asp/Asn_hydroxyl_site"/>
</dbReference>
<dbReference type="InterPro" id="IPR018097">
    <property type="entry name" value="EGF_Ca-bd_CS"/>
</dbReference>
<dbReference type="InterPro" id="IPR035972">
    <property type="entry name" value="GLA-like_dom_SF"/>
</dbReference>
<dbReference type="InterPro" id="IPR000294">
    <property type="entry name" value="GLA_domain"/>
</dbReference>
<dbReference type="InterPro" id="IPR012224">
    <property type="entry name" value="Pept_S1A_FX"/>
</dbReference>
<dbReference type="InterPro" id="IPR050442">
    <property type="entry name" value="Peptidase_S1_coag_factors"/>
</dbReference>
<dbReference type="InterPro" id="IPR009003">
    <property type="entry name" value="Peptidase_S1_PA"/>
</dbReference>
<dbReference type="InterPro" id="IPR043504">
    <property type="entry name" value="Peptidase_S1_PA_chymotrypsin"/>
</dbReference>
<dbReference type="InterPro" id="IPR001314">
    <property type="entry name" value="Peptidase_S1A"/>
</dbReference>
<dbReference type="InterPro" id="IPR001254">
    <property type="entry name" value="Trypsin_dom"/>
</dbReference>
<dbReference type="InterPro" id="IPR018114">
    <property type="entry name" value="TRYPSIN_HIS"/>
</dbReference>
<dbReference type="InterPro" id="IPR033116">
    <property type="entry name" value="TRYPSIN_SER"/>
</dbReference>
<dbReference type="PANTHER" id="PTHR24278">
    <property type="entry name" value="COAGULATION FACTOR"/>
    <property type="match status" value="1"/>
</dbReference>
<dbReference type="PANTHER" id="PTHR24278:SF31">
    <property type="entry name" value="COAGULATION FACTOR IX"/>
    <property type="match status" value="1"/>
</dbReference>
<dbReference type="Pfam" id="PF00008">
    <property type="entry name" value="EGF"/>
    <property type="match status" value="1"/>
</dbReference>
<dbReference type="Pfam" id="PF14670">
    <property type="entry name" value="FXa_inhibition"/>
    <property type="match status" value="1"/>
</dbReference>
<dbReference type="Pfam" id="PF00594">
    <property type="entry name" value="Gla"/>
    <property type="match status" value="1"/>
</dbReference>
<dbReference type="Pfam" id="PF00089">
    <property type="entry name" value="Trypsin"/>
    <property type="match status" value="1"/>
</dbReference>
<dbReference type="PIRSF" id="PIRSF001143">
    <property type="entry name" value="Factor_X"/>
    <property type="match status" value="1"/>
</dbReference>
<dbReference type="PRINTS" id="PR00722">
    <property type="entry name" value="CHYMOTRYPSIN"/>
</dbReference>
<dbReference type="PRINTS" id="PR00010">
    <property type="entry name" value="EGFBLOOD"/>
</dbReference>
<dbReference type="PRINTS" id="PR00001">
    <property type="entry name" value="GLABLOOD"/>
</dbReference>
<dbReference type="SMART" id="SM00181">
    <property type="entry name" value="EGF"/>
    <property type="match status" value="2"/>
</dbReference>
<dbReference type="SMART" id="SM00179">
    <property type="entry name" value="EGF_CA"/>
    <property type="match status" value="1"/>
</dbReference>
<dbReference type="SMART" id="SM00069">
    <property type="entry name" value="GLA"/>
    <property type="match status" value="1"/>
</dbReference>
<dbReference type="SMART" id="SM00020">
    <property type="entry name" value="Tryp_SPc"/>
    <property type="match status" value="1"/>
</dbReference>
<dbReference type="SUPFAM" id="SSF57196">
    <property type="entry name" value="EGF/Laminin"/>
    <property type="match status" value="1"/>
</dbReference>
<dbReference type="SUPFAM" id="SSF57630">
    <property type="entry name" value="GLA-domain"/>
    <property type="match status" value="1"/>
</dbReference>
<dbReference type="SUPFAM" id="SSF50494">
    <property type="entry name" value="Trypsin-like serine proteases"/>
    <property type="match status" value="1"/>
</dbReference>
<dbReference type="PROSITE" id="PS00010">
    <property type="entry name" value="ASX_HYDROXYL"/>
    <property type="match status" value="1"/>
</dbReference>
<dbReference type="PROSITE" id="PS00022">
    <property type="entry name" value="EGF_1"/>
    <property type="match status" value="1"/>
</dbReference>
<dbReference type="PROSITE" id="PS01186">
    <property type="entry name" value="EGF_2"/>
    <property type="match status" value="2"/>
</dbReference>
<dbReference type="PROSITE" id="PS50026">
    <property type="entry name" value="EGF_3"/>
    <property type="match status" value="1"/>
</dbReference>
<dbReference type="PROSITE" id="PS01187">
    <property type="entry name" value="EGF_CA"/>
    <property type="match status" value="1"/>
</dbReference>
<dbReference type="PROSITE" id="PS00011">
    <property type="entry name" value="GLA_1"/>
    <property type="match status" value="1"/>
</dbReference>
<dbReference type="PROSITE" id="PS50998">
    <property type="entry name" value="GLA_2"/>
    <property type="match status" value="1"/>
</dbReference>
<dbReference type="PROSITE" id="PS50240">
    <property type="entry name" value="TRYPSIN_DOM"/>
    <property type="match status" value="1"/>
</dbReference>
<dbReference type="PROSITE" id="PS00134">
    <property type="entry name" value="TRYPSIN_HIS"/>
    <property type="match status" value="1"/>
</dbReference>
<dbReference type="PROSITE" id="PS00135">
    <property type="entry name" value="TRYPSIN_SER"/>
    <property type="match status" value="1"/>
</dbReference>
<evidence type="ECO:0000250" key="1"/>
<evidence type="ECO:0000250" key="2">
    <source>
        <dbReference type="UniProtKB" id="P00740"/>
    </source>
</evidence>
<evidence type="ECO:0000250" key="3">
    <source>
        <dbReference type="UniProtKB" id="P00741"/>
    </source>
</evidence>
<evidence type="ECO:0000255" key="4"/>
<evidence type="ECO:0000255" key="5">
    <source>
        <dbReference type="PROSITE-ProRule" id="PRU00076"/>
    </source>
</evidence>
<evidence type="ECO:0000255" key="6">
    <source>
        <dbReference type="PROSITE-ProRule" id="PRU00274"/>
    </source>
</evidence>
<evidence type="ECO:0000255" key="7">
    <source>
        <dbReference type="PROSITE-ProRule" id="PRU00463"/>
    </source>
</evidence>
<evidence type="ECO:0000269" key="8">
    <source>
    </source>
</evidence>
<sequence length="462" mass="51808">MADAPGLIPIFLLGYLLSTECAVFLDRENATKILTRPKRYNSGKLEEFVQGNLERECIEERCSFEEAREVFENTEKTTEFWKQYVDGDQCESNPCLNGGICKDDINSYECWCQAGFEGRNCELDATCSIKNGRCKQFCKNSPDNKIICSCTEGYQLAEDQKSCEPAVPFPCGRVSVAYNSKKITRAETVFSNTDYGNSTELILDDITNSTILDNLTENSEPINDFTRVVGGENAKPGQIPWQVILNGEIEAFCGGAIINEKWIVTAAHCLKPGDKIEVVAGEHNIDEKEDTEQRRNVIRTIPHHQYNATINKYSHDIALLELDKPLILNSYVTPICVANKEYTNIFLKFGSGYVSGWGKVFNKGRQASILQYLRVPLVDRATCLRSTKFSIYNNMFCAGYREGGKDSCEGDSGGPHVTEVEGTSFLTGIISWGEECAMKGKYGIYTKVSRYVNWIKEKTKLT</sequence>
<organism>
    <name type="scientific">Rattus norvegicus</name>
    <name type="common">Rat</name>
    <dbReference type="NCBI Taxonomy" id="10116"/>
    <lineage>
        <taxon>Eukaryota</taxon>
        <taxon>Metazoa</taxon>
        <taxon>Chordata</taxon>
        <taxon>Craniata</taxon>
        <taxon>Vertebrata</taxon>
        <taxon>Euteleostomi</taxon>
        <taxon>Mammalia</taxon>
        <taxon>Eutheria</taxon>
        <taxon>Euarchontoglires</taxon>
        <taxon>Glires</taxon>
        <taxon>Rodentia</taxon>
        <taxon>Myomorpha</taxon>
        <taxon>Muroidea</taxon>
        <taxon>Muridae</taxon>
        <taxon>Murinae</taxon>
        <taxon>Rattus</taxon>
    </lineage>
</organism>
<comment type="function">
    <text evidence="2">Factor IX is a vitamin K-dependent plasma protein that participates in the intrinsic pathway of blood coagulation by converting factor X to its active form in the presence of Ca(2+) ions, phospholipids, and factor VIIIa.</text>
</comment>
<comment type="catalytic activity">
    <reaction evidence="2">
        <text>Selective cleavage of Arg-|-Ile bond in factor X to form factor Xa.</text>
        <dbReference type="EC" id="3.4.21.22"/>
    </reaction>
</comment>
<comment type="subunit">
    <text evidence="2 8">Heterodimer of a light chain and a heavy chain; disulfide-linked. Interacts (inactive and activated) with F11 (activated) in calcium-dependent manner. Interacts with SERPINC1 (By similarity). Interacts (inactive and activated) with nitrophorin-2, an anticoagulant protein from Rhodnius prolixus (PubMed:20838739).</text>
</comment>
<comment type="subcellular location">
    <subcellularLocation>
        <location evidence="2">Secreted</location>
    </subcellularLocation>
</comment>
<comment type="domain">
    <text evidence="3">Calcium binds to the gamma-carboxyglutamic acid (Gla) residues in the Gla domain. Calcium can also bind, with stronger affinity, to another site beyond the Gla domain. Under physiological ion concentrations, Ca(2+) is displaced by Mg(2+) from some of the gammaglutamate residues in the N-terminal Gla domain. This leads to a subtle conformation change that may affect the interaction with its binding protein.</text>
</comment>
<comment type="PTM">
    <text evidence="2">Activated by factor XIa, which excises the activation peptide. The propeptide can also be removed by snake venom protease (By similarity). Activated by coagulation factor VIIa-tissue factor (F7-F3) complex in calcium-dependent manner (By similarity).</text>
</comment>
<comment type="PTM">
    <text evidence="2">The iron and 2-oxoglutarate dependent 3-hydroxylation of aspartate and asparagine is (R) stereospecific within EGF domains.</text>
</comment>
<comment type="PTM">
    <text evidence="2">Predominantly O-glucosylated at Ser-92 by POGLUT1 in vitro.</text>
</comment>
<comment type="similarity">
    <text evidence="6">Belongs to the peptidase S1 family.</text>
</comment>
<gene>
    <name type="primary">F9</name>
    <name type="synonym">Cf9</name>
</gene>
<accession>P16296</accession>
<accession>F1M1M6</accession>
<proteinExistence type="evidence at protein level"/>